<gene>
    <name evidence="1" type="primary">rplP</name>
    <name type="ordered locus">SPAB_04274</name>
</gene>
<feature type="chain" id="PRO_1000086775" description="Large ribosomal subunit protein uL16">
    <location>
        <begin position="1"/>
        <end position="136"/>
    </location>
</feature>
<keyword id="KW-0687">Ribonucleoprotein</keyword>
<keyword id="KW-0689">Ribosomal protein</keyword>
<keyword id="KW-0694">RNA-binding</keyword>
<keyword id="KW-0699">rRNA-binding</keyword>
<keyword id="KW-0820">tRNA-binding</keyword>
<comment type="function">
    <text evidence="1">Binds 23S rRNA and is also seen to make contacts with the A and possibly P site tRNAs.</text>
</comment>
<comment type="subunit">
    <text evidence="1">Part of the 50S ribosomal subunit.</text>
</comment>
<comment type="similarity">
    <text evidence="1">Belongs to the universal ribosomal protein uL16 family.</text>
</comment>
<organism>
    <name type="scientific">Salmonella paratyphi B (strain ATCC BAA-1250 / SPB7)</name>
    <dbReference type="NCBI Taxonomy" id="1016998"/>
    <lineage>
        <taxon>Bacteria</taxon>
        <taxon>Pseudomonadati</taxon>
        <taxon>Pseudomonadota</taxon>
        <taxon>Gammaproteobacteria</taxon>
        <taxon>Enterobacterales</taxon>
        <taxon>Enterobacteriaceae</taxon>
        <taxon>Salmonella</taxon>
    </lineage>
</organism>
<proteinExistence type="inferred from homology"/>
<reference key="1">
    <citation type="submission" date="2007-11" db="EMBL/GenBank/DDBJ databases">
        <authorList>
            <consortium name="The Salmonella enterica serovar Paratyphi B Genome Sequencing Project"/>
            <person name="McClelland M."/>
            <person name="Sanderson E.K."/>
            <person name="Porwollik S."/>
            <person name="Spieth J."/>
            <person name="Clifton W.S."/>
            <person name="Fulton R."/>
            <person name="Cordes M."/>
            <person name="Wollam A."/>
            <person name="Shah N."/>
            <person name="Pepin K."/>
            <person name="Bhonagiri V."/>
            <person name="Nash W."/>
            <person name="Johnson M."/>
            <person name="Thiruvilangam P."/>
            <person name="Wilson R."/>
        </authorList>
    </citation>
    <scope>NUCLEOTIDE SEQUENCE [LARGE SCALE GENOMIC DNA]</scope>
    <source>
        <strain>ATCC BAA-1250 / SPB7</strain>
    </source>
</reference>
<protein>
    <recommendedName>
        <fullName evidence="1">Large ribosomal subunit protein uL16</fullName>
    </recommendedName>
    <alternativeName>
        <fullName evidence="2">50S ribosomal protein L16</fullName>
    </alternativeName>
</protein>
<sequence length="136" mass="15194">MLQPKRTKFRKMHKGRNRGLAAGADVSFGSFGLKAVGRGRLTARQIEAARRAMTRAVKRQGKIWIRVFPDKPITEKPLAVRMGKGKGNVEYWVALIQPGKVLYEMDGVPEELAREAFKLAAAKLPIKTTFVTKTVM</sequence>
<name>RL16_SALPB</name>
<accession>A9MSZ1</accession>
<dbReference type="EMBL" id="CP000886">
    <property type="protein sequence ID" value="ABX69591.1"/>
    <property type="molecule type" value="Genomic_DNA"/>
</dbReference>
<dbReference type="RefSeq" id="WP_000941208.1">
    <property type="nucleotide sequence ID" value="NC_010102.1"/>
</dbReference>
<dbReference type="SMR" id="A9MSZ1"/>
<dbReference type="GeneID" id="93035738"/>
<dbReference type="KEGG" id="spq:SPAB_04274"/>
<dbReference type="PATRIC" id="fig|1016998.12.peg.4020"/>
<dbReference type="HOGENOM" id="CLU_078858_2_1_6"/>
<dbReference type="BioCyc" id="SENT1016998:SPAB_RS17400-MONOMER"/>
<dbReference type="Proteomes" id="UP000008556">
    <property type="component" value="Chromosome"/>
</dbReference>
<dbReference type="GO" id="GO:0022625">
    <property type="term" value="C:cytosolic large ribosomal subunit"/>
    <property type="evidence" value="ECO:0007669"/>
    <property type="project" value="TreeGrafter"/>
</dbReference>
<dbReference type="GO" id="GO:0019843">
    <property type="term" value="F:rRNA binding"/>
    <property type="evidence" value="ECO:0007669"/>
    <property type="project" value="UniProtKB-UniRule"/>
</dbReference>
<dbReference type="GO" id="GO:0003735">
    <property type="term" value="F:structural constituent of ribosome"/>
    <property type="evidence" value="ECO:0007669"/>
    <property type="project" value="InterPro"/>
</dbReference>
<dbReference type="GO" id="GO:0000049">
    <property type="term" value="F:tRNA binding"/>
    <property type="evidence" value="ECO:0007669"/>
    <property type="project" value="UniProtKB-KW"/>
</dbReference>
<dbReference type="GO" id="GO:0006412">
    <property type="term" value="P:translation"/>
    <property type="evidence" value="ECO:0007669"/>
    <property type="project" value="UniProtKB-UniRule"/>
</dbReference>
<dbReference type="CDD" id="cd01433">
    <property type="entry name" value="Ribosomal_L16_L10e"/>
    <property type="match status" value="1"/>
</dbReference>
<dbReference type="FunFam" id="3.90.1170.10:FF:000001">
    <property type="entry name" value="50S ribosomal protein L16"/>
    <property type="match status" value="1"/>
</dbReference>
<dbReference type="Gene3D" id="3.90.1170.10">
    <property type="entry name" value="Ribosomal protein L10e/L16"/>
    <property type="match status" value="1"/>
</dbReference>
<dbReference type="HAMAP" id="MF_01342">
    <property type="entry name" value="Ribosomal_uL16"/>
    <property type="match status" value="1"/>
</dbReference>
<dbReference type="InterPro" id="IPR047873">
    <property type="entry name" value="Ribosomal_uL16"/>
</dbReference>
<dbReference type="InterPro" id="IPR000114">
    <property type="entry name" value="Ribosomal_uL16_bact-type"/>
</dbReference>
<dbReference type="InterPro" id="IPR020798">
    <property type="entry name" value="Ribosomal_uL16_CS"/>
</dbReference>
<dbReference type="InterPro" id="IPR016180">
    <property type="entry name" value="Ribosomal_uL16_dom"/>
</dbReference>
<dbReference type="InterPro" id="IPR036920">
    <property type="entry name" value="Ribosomal_uL16_sf"/>
</dbReference>
<dbReference type="NCBIfam" id="TIGR01164">
    <property type="entry name" value="rplP_bact"/>
    <property type="match status" value="1"/>
</dbReference>
<dbReference type="PANTHER" id="PTHR12220">
    <property type="entry name" value="50S/60S RIBOSOMAL PROTEIN L16"/>
    <property type="match status" value="1"/>
</dbReference>
<dbReference type="PANTHER" id="PTHR12220:SF13">
    <property type="entry name" value="LARGE RIBOSOMAL SUBUNIT PROTEIN UL16M"/>
    <property type="match status" value="1"/>
</dbReference>
<dbReference type="Pfam" id="PF00252">
    <property type="entry name" value="Ribosomal_L16"/>
    <property type="match status" value="1"/>
</dbReference>
<dbReference type="PRINTS" id="PR00060">
    <property type="entry name" value="RIBOSOMALL16"/>
</dbReference>
<dbReference type="SUPFAM" id="SSF54686">
    <property type="entry name" value="Ribosomal protein L16p/L10e"/>
    <property type="match status" value="1"/>
</dbReference>
<dbReference type="PROSITE" id="PS00586">
    <property type="entry name" value="RIBOSOMAL_L16_1"/>
    <property type="match status" value="1"/>
</dbReference>
<dbReference type="PROSITE" id="PS00701">
    <property type="entry name" value="RIBOSOMAL_L16_2"/>
    <property type="match status" value="1"/>
</dbReference>
<evidence type="ECO:0000255" key="1">
    <source>
        <dbReference type="HAMAP-Rule" id="MF_01342"/>
    </source>
</evidence>
<evidence type="ECO:0000305" key="2"/>